<evidence type="ECO:0000250" key="1"/>
<evidence type="ECO:0000255" key="2"/>
<evidence type="ECO:0000255" key="3">
    <source>
        <dbReference type="PROSITE-ProRule" id="PRU00084"/>
    </source>
</evidence>
<evidence type="ECO:0000256" key="4">
    <source>
        <dbReference type="SAM" id="MobiDB-lite"/>
    </source>
</evidence>
<evidence type="ECO:0000305" key="5"/>
<reference key="1">
    <citation type="submission" date="2004-11" db="EMBL/GenBank/DDBJ databases">
        <authorList>
            <consortium name="The German cDNA consortium"/>
        </authorList>
    </citation>
    <scope>NUCLEOTIDE SEQUENCE [LARGE SCALE MRNA]</scope>
    <source>
        <tissue>Kidney</tissue>
    </source>
</reference>
<organism>
    <name type="scientific">Pongo abelii</name>
    <name type="common">Sumatran orangutan</name>
    <name type="synonym">Pongo pygmaeus abelii</name>
    <dbReference type="NCBI Taxonomy" id="9601"/>
    <lineage>
        <taxon>Eukaryota</taxon>
        <taxon>Metazoa</taxon>
        <taxon>Chordata</taxon>
        <taxon>Craniata</taxon>
        <taxon>Vertebrata</taxon>
        <taxon>Euteleostomi</taxon>
        <taxon>Mammalia</taxon>
        <taxon>Eutheria</taxon>
        <taxon>Euarchontoglires</taxon>
        <taxon>Primates</taxon>
        <taxon>Haplorrhini</taxon>
        <taxon>Catarrhini</taxon>
        <taxon>Hominidae</taxon>
        <taxon>Pongo</taxon>
    </lineage>
</organism>
<feature type="chain" id="PRO_0000318100" description="FERM domain-containing protein 3">
    <location>
        <begin position="1"/>
        <end position="597"/>
    </location>
</feature>
<feature type="transmembrane region" description="Helical" evidence="2">
    <location>
        <begin position="531"/>
        <end position="551"/>
    </location>
</feature>
<feature type="domain" description="FERM" evidence="3">
    <location>
        <begin position="32"/>
        <end position="312"/>
    </location>
</feature>
<feature type="region of interest" description="Disordered" evidence="4">
    <location>
        <begin position="409"/>
        <end position="435"/>
    </location>
</feature>
<feature type="compositionally biased region" description="Acidic residues" evidence="4">
    <location>
        <begin position="423"/>
        <end position="432"/>
    </location>
</feature>
<keyword id="KW-0472">Membrane</keyword>
<keyword id="KW-1185">Reference proteome</keyword>
<keyword id="KW-0812">Transmembrane</keyword>
<keyword id="KW-1133">Transmembrane helix</keyword>
<sequence length="597" mass="68821">MFASCHCVPRGRRTMKMIHFRSSSIKSLSQEMRCTIRLLDDSEISCHIQRETKGQFLIDHICNYYSLLEKDYFGIRYVDPEKQRHWLEPNKSIFKQMKTHPPYTMCFRVKFYPHEPLKIKEELTRYLLYLQIKRDIFHGRLLCSFSDAAYLGACIVQAELGDYDPDEHPENYISEFEIFPKQSQKLERKIVEIHKNELRGQSPPVAEFNLLLKAHTLETYGVDPHPCKDSTGTTTFLGFTAAGFVVFQGNKRIHLIKWPDVCKLKFEGKTFYVIGTQKEKKAMLAFHTSTPAACKHLWKCGVENQAFYKYAKSSQIKTVSSSKIFFKGSRFRYSGKVAKEVVEASSKIQREPPEVHRANITQSRSSHSLNKQLIINMEPLQPLLSSPSEQEEELPLGEGVPLPKEENISAPLISSSPVKAAQEYEDPPSEEEDKIKEEPLTISELVYNPSASLLPTPVDDDEIDMLFDCPSRLELEREDTDSFEDLEADENAFLIAEEEELKEARRALSWSYDILTGHIRVNPLVKSFSRLLVVGLGLLLFVFPLLLLLLESGIDLSFLCEIRQTPEFEQFHYEYYCPLKEWVTGKVHRILYMLGCS</sequence>
<protein>
    <recommendedName>
        <fullName>FERM domain-containing protein 3</fullName>
    </recommendedName>
</protein>
<dbReference type="EMBL" id="CR859953">
    <property type="protein sequence ID" value="CAH92107.1"/>
    <property type="molecule type" value="mRNA"/>
</dbReference>
<dbReference type="RefSeq" id="NP_001126229.1">
    <property type="nucleotide sequence ID" value="NM_001132757.2"/>
</dbReference>
<dbReference type="SMR" id="Q5R803"/>
<dbReference type="FunCoup" id="Q5R803">
    <property type="interactions" value="178"/>
</dbReference>
<dbReference type="STRING" id="9601.ENSPPYP00000021647"/>
<dbReference type="GeneID" id="100173199"/>
<dbReference type="KEGG" id="pon:100173199"/>
<dbReference type="CTD" id="257019"/>
<dbReference type="eggNOG" id="KOG3530">
    <property type="taxonomic scope" value="Eukaryota"/>
</dbReference>
<dbReference type="InParanoid" id="Q5R803"/>
<dbReference type="OrthoDB" id="6266673at2759"/>
<dbReference type="Proteomes" id="UP000001595">
    <property type="component" value="Unplaced"/>
</dbReference>
<dbReference type="GO" id="GO:0005856">
    <property type="term" value="C:cytoskeleton"/>
    <property type="evidence" value="ECO:0007669"/>
    <property type="project" value="InterPro"/>
</dbReference>
<dbReference type="GO" id="GO:0016020">
    <property type="term" value="C:membrane"/>
    <property type="evidence" value="ECO:0007669"/>
    <property type="project" value="UniProtKB-SubCell"/>
</dbReference>
<dbReference type="GO" id="GO:0008092">
    <property type="term" value="F:cytoskeletal protein binding"/>
    <property type="evidence" value="ECO:0007669"/>
    <property type="project" value="InterPro"/>
</dbReference>
<dbReference type="GO" id="GO:0031032">
    <property type="term" value="P:actomyosin structure organization"/>
    <property type="evidence" value="ECO:0007669"/>
    <property type="project" value="TreeGrafter"/>
</dbReference>
<dbReference type="CDD" id="cd14473">
    <property type="entry name" value="FERM_B-lobe"/>
    <property type="match status" value="1"/>
</dbReference>
<dbReference type="CDD" id="cd17102">
    <property type="entry name" value="FERM_F1_FRMD3"/>
    <property type="match status" value="1"/>
</dbReference>
<dbReference type="FunFam" id="3.10.20.90:FF:000002">
    <property type="entry name" value="Erythrocyte protein band 4.1-like 3"/>
    <property type="match status" value="1"/>
</dbReference>
<dbReference type="FunFam" id="2.30.29.30:FF:000043">
    <property type="entry name" value="FERM domain-containing protein 5"/>
    <property type="match status" value="1"/>
</dbReference>
<dbReference type="FunFam" id="1.20.80.10:FF:000006">
    <property type="entry name" value="FERM domain-containing protein 5 isoform X1"/>
    <property type="match status" value="1"/>
</dbReference>
<dbReference type="Gene3D" id="1.20.80.10">
    <property type="match status" value="1"/>
</dbReference>
<dbReference type="Gene3D" id="3.10.20.90">
    <property type="entry name" value="Phosphatidylinositol 3-kinase Catalytic Subunit, Chain A, domain 1"/>
    <property type="match status" value="1"/>
</dbReference>
<dbReference type="Gene3D" id="2.30.29.30">
    <property type="entry name" value="Pleckstrin-homology domain (PH domain)/Phosphotyrosine-binding domain (PTB)"/>
    <property type="match status" value="1"/>
</dbReference>
<dbReference type="InterPro" id="IPR019749">
    <property type="entry name" value="Band_41_domain"/>
</dbReference>
<dbReference type="InterPro" id="IPR000798">
    <property type="entry name" value="Ez/rad/moesin-like"/>
</dbReference>
<dbReference type="InterPro" id="IPR014847">
    <property type="entry name" value="FA"/>
</dbReference>
<dbReference type="InterPro" id="IPR014352">
    <property type="entry name" value="FERM/acyl-CoA-bd_prot_sf"/>
</dbReference>
<dbReference type="InterPro" id="IPR035963">
    <property type="entry name" value="FERM_2"/>
</dbReference>
<dbReference type="InterPro" id="IPR019748">
    <property type="entry name" value="FERM_central"/>
</dbReference>
<dbReference type="InterPro" id="IPR019747">
    <property type="entry name" value="FERM_CS"/>
</dbReference>
<dbReference type="InterPro" id="IPR000299">
    <property type="entry name" value="FERM_domain"/>
</dbReference>
<dbReference type="InterPro" id="IPR018979">
    <property type="entry name" value="FERM_N"/>
</dbReference>
<dbReference type="InterPro" id="IPR018980">
    <property type="entry name" value="FERM_PH-like_C"/>
</dbReference>
<dbReference type="InterPro" id="IPR011993">
    <property type="entry name" value="PH-like_dom_sf"/>
</dbReference>
<dbReference type="InterPro" id="IPR029071">
    <property type="entry name" value="Ubiquitin-like_domsf"/>
</dbReference>
<dbReference type="PANTHER" id="PTHR23280">
    <property type="entry name" value="4.1 G PROTEIN"/>
    <property type="match status" value="1"/>
</dbReference>
<dbReference type="PANTHER" id="PTHR23280:SF8">
    <property type="entry name" value="FERM DOMAIN-CONTAINING PROTEIN 3"/>
    <property type="match status" value="1"/>
</dbReference>
<dbReference type="Pfam" id="PF08736">
    <property type="entry name" value="FA"/>
    <property type="match status" value="1"/>
</dbReference>
<dbReference type="Pfam" id="PF09380">
    <property type="entry name" value="FERM_C"/>
    <property type="match status" value="1"/>
</dbReference>
<dbReference type="Pfam" id="PF00373">
    <property type="entry name" value="FERM_M"/>
    <property type="match status" value="1"/>
</dbReference>
<dbReference type="Pfam" id="PF09379">
    <property type="entry name" value="FERM_N"/>
    <property type="match status" value="1"/>
</dbReference>
<dbReference type="PRINTS" id="PR00935">
    <property type="entry name" value="BAND41"/>
</dbReference>
<dbReference type="PRINTS" id="PR00661">
    <property type="entry name" value="ERMFAMILY"/>
</dbReference>
<dbReference type="SMART" id="SM00295">
    <property type="entry name" value="B41"/>
    <property type="match status" value="1"/>
</dbReference>
<dbReference type="SMART" id="SM01195">
    <property type="entry name" value="FA"/>
    <property type="match status" value="1"/>
</dbReference>
<dbReference type="SMART" id="SM01196">
    <property type="entry name" value="FERM_C"/>
    <property type="match status" value="1"/>
</dbReference>
<dbReference type="SUPFAM" id="SSF50729">
    <property type="entry name" value="PH domain-like"/>
    <property type="match status" value="1"/>
</dbReference>
<dbReference type="SUPFAM" id="SSF47031">
    <property type="entry name" value="Second domain of FERM"/>
    <property type="match status" value="1"/>
</dbReference>
<dbReference type="SUPFAM" id="SSF54236">
    <property type="entry name" value="Ubiquitin-like"/>
    <property type="match status" value="1"/>
</dbReference>
<dbReference type="PROSITE" id="PS00660">
    <property type="entry name" value="FERM_1"/>
    <property type="match status" value="1"/>
</dbReference>
<dbReference type="PROSITE" id="PS50057">
    <property type="entry name" value="FERM_3"/>
    <property type="match status" value="1"/>
</dbReference>
<comment type="function">
    <text evidence="1">Putative tumor suppressor gene that may be implicated in the origin and progression of lung cancer.</text>
</comment>
<comment type="subcellular location">
    <subcellularLocation>
        <location evidence="5">Membrane</location>
        <topology evidence="5">Single-pass membrane protein</topology>
    </subcellularLocation>
</comment>
<gene>
    <name type="primary">FRMD3</name>
</gene>
<proteinExistence type="evidence at transcript level"/>
<accession>Q5R803</accession>
<name>FRMD3_PONAB</name>